<proteinExistence type="evidence at transcript level"/>
<organism>
    <name type="scientific">Oryza sativa subsp. japonica</name>
    <name type="common">Rice</name>
    <dbReference type="NCBI Taxonomy" id="39947"/>
    <lineage>
        <taxon>Eukaryota</taxon>
        <taxon>Viridiplantae</taxon>
        <taxon>Streptophyta</taxon>
        <taxon>Embryophyta</taxon>
        <taxon>Tracheophyta</taxon>
        <taxon>Spermatophyta</taxon>
        <taxon>Magnoliopsida</taxon>
        <taxon>Liliopsida</taxon>
        <taxon>Poales</taxon>
        <taxon>Poaceae</taxon>
        <taxon>BOP clade</taxon>
        <taxon>Oryzoideae</taxon>
        <taxon>Oryzeae</taxon>
        <taxon>Oryzinae</taxon>
        <taxon>Oryza</taxon>
        <taxon>Oryza sativa</taxon>
    </lineage>
</organism>
<feature type="chain" id="PRO_0000430122" description="UMP-CMP kinase 2">
    <location>
        <begin position="1"/>
        <end position="243"/>
    </location>
</feature>
<feature type="region of interest" description="NMP" evidence="1">
    <location>
        <begin position="89"/>
        <end position="118"/>
    </location>
</feature>
<feature type="region of interest" description="LID" evidence="1">
    <location>
        <begin position="181"/>
        <end position="189"/>
    </location>
</feature>
<feature type="binding site" evidence="1">
    <location>
        <begin position="69"/>
        <end position="74"/>
    </location>
    <ligand>
        <name>ATP</name>
        <dbReference type="ChEBI" id="CHEBI:30616"/>
    </ligand>
</feature>
<feature type="binding site" evidence="1">
    <location>
        <position position="95"/>
    </location>
    <ligand>
        <name>a ribonucleoside 5'-phosphate</name>
        <dbReference type="ChEBI" id="CHEBI:58043"/>
    </ligand>
</feature>
<feature type="binding site" evidence="1">
    <location>
        <begin position="116"/>
        <end position="118"/>
    </location>
    <ligand>
        <name>a ribonucleoside 5'-phosphate</name>
        <dbReference type="ChEBI" id="CHEBI:58043"/>
    </ligand>
</feature>
<feature type="binding site" evidence="1">
    <location>
        <begin position="143"/>
        <end position="146"/>
    </location>
    <ligand>
        <name>a ribonucleoside 5'-phosphate</name>
        <dbReference type="ChEBI" id="CHEBI:58043"/>
    </ligand>
</feature>
<feature type="binding site" evidence="1">
    <location>
        <position position="150"/>
    </location>
    <ligand>
        <name>CMP</name>
        <dbReference type="ChEBI" id="CHEBI:60377"/>
    </ligand>
</feature>
<feature type="binding site" evidence="1">
    <location>
        <position position="182"/>
    </location>
    <ligand>
        <name>ATP</name>
        <dbReference type="ChEBI" id="CHEBI:30616"/>
    </ligand>
</feature>
<feature type="binding site" evidence="1">
    <location>
        <position position="186"/>
    </location>
    <ligand>
        <name>a ribonucleoside 5'-phosphate</name>
        <dbReference type="ChEBI" id="CHEBI:58043"/>
    </ligand>
</feature>
<feature type="binding site" evidence="1">
    <location>
        <position position="197"/>
    </location>
    <ligand>
        <name>a ribonucleoside 5'-phosphate</name>
        <dbReference type="ChEBI" id="CHEBI:58043"/>
    </ligand>
</feature>
<feature type="sequence conflict" description="In Ref. 1; CAE04607." evidence="2" ref="1">
    <original>S</original>
    <variation>T</variation>
    <location>
        <position position="33"/>
    </location>
</feature>
<feature type="sequence conflict" description="In Ref. 5; AK071444." evidence="2" ref="5">
    <original>T</original>
    <variation>A</variation>
    <location>
        <position position="193"/>
    </location>
</feature>
<dbReference type="EC" id="2.7.4.14" evidence="1"/>
<dbReference type="EMBL" id="AL662992">
    <property type="protein sequence ID" value="CAE04607.2"/>
    <property type="status" value="ALT_SEQ"/>
    <property type="molecule type" value="Genomic_DNA"/>
</dbReference>
<dbReference type="EMBL" id="AP008210">
    <property type="protein sequence ID" value="BAF13924.2"/>
    <property type="status" value="ALT_SEQ"/>
    <property type="molecule type" value="Genomic_DNA"/>
</dbReference>
<dbReference type="EMBL" id="AP014960">
    <property type="status" value="NOT_ANNOTATED_CDS"/>
    <property type="molecule type" value="Genomic_DNA"/>
</dbReference>
<dbReference type="EMBL" id="AK071444">
    <property type="status" value="NOT_ANNOTATED_CDS"/>
    <property type="molecule type" value="mRNA"/>
</dbReference>
<dbReference type="SMR" id="Q7XMI0"/>
<dbReference type="FunCoup" id="Q7XMI0">
    <property type="interactions" value="2307"/>
</dbReference>
<dbReference type="STRING" id="39947.Q7XMI0"/>
<dbReference type="PaxDb" id="39947-Q7XMI0"/>
<dbReference type="KEGG" id="dosa:Os04g0105500"/>
<dbReference type="eggNOG" id="KOG3079">
    <property type="taxonomic scope" value="Eukaryota"/>
</dbReference>
<dbReference type="HOGENOM" id="CLU_032354_0_1_1"/>
<dbReference type="InParanoid" id="Q7XMI0"/>
<dbReference type="Proteomes" id="UP000000763">
    <property type="component" value="Chromosome 4"/>
</dbReference>
<dbReference type="Proteomes" id="UP000059680">
    <property type="component" value="Chromosome 4"/>
</dbReference>
<dbReference type="GO" id="GO:0005737">
    <property type="term" value="C:cytoplasm"/>
    <property type="evidence" value="ECO:0000318"/>
    <property type="project" value="GO_Central"/>
</dbReference>
<dbReference type="GO" id="GO:0005634">
    <property type="term" value="C:nucleus"/>
    <property type="evidence" value="ECO:0000318"/>
    <property type="project" value="GO_Central"/>
</dbReference>
<dbReference type="GO" id="GO:0004127">
    <property type="term" value="F:(d)CMP kinase activity"/>
    <property type="evidence" value="ECO:0000318"/>
    <property type="project" value="GO_Central"/>
</dbReference>
<dbReference type="GO" id="GO:0005524">
    <property type="term" value="F:ATP binding"/>
    <property type="evidence" value="ECO:0007669"/>
    <property type="project" value="UniProtKB-KW"/>
</dbReference>
<dbReference type="GO" id="GO:0036430">
    <property type="term" value="F:CMP kinase activity"/>
    <property type="evidence" value="ECO:0007669"/>
    <property type="project" value="RHEA"/>
</dbReference>
<dbReference type="GO" id="GO:0036431">
    <property type="term" value="F:dCMP kinase activity"/>
    <property type="evidence" value="ECO:0007669"/>
    <property type="project" value="RHEA"/>
</dbReference>
<dbReference type="GO" id="GO:0033862">
    <property type="term" value="F:UMP kinase activity"/>
    <property type="evidence" value="ECO:0000318"/>
    <property type="project" value="GO_Central"/>
</dbReference>
<dbReference type="GO" id="GO:0006207">
    <property type="term" value="P:'de novo' pyrimidine nucleobase biosynthetic process"/>
    <property type="evidence" value="ECO:0007669"/>
    <property type="project" value="InterPro"/>
</dbReference>
<dbReference type="GO" id="GO:0046705">
    <property type="term" value="P:CDP biosynthetic process"/>
    <property type="evidence" value="ECO:0000318"/>
    <property type="project" value="GO_Central"/>
</dbReference>
<dbReference type="GO" id="GO:0006225">
    <property type="term" value="P:UDP biosynthetic process"/>
    <property type="evidence" value="ECO:0000318"/>
    <property type="project" value="GO_Central"/>
</dbReference>
<dbReference type="CDD" id="cd01428">
    <property type="entry name" value="ADK"/>
    <property type="match status" value="1"/>
</dbReference>
<dbReference type="Gene3D" id="3.40.50.300">
    <property type="entry name" value="P-loop containing nucleotide triphosphate hydrolases"/>
    <property type="match status" value="1"/>
</dbReference>
<dbReference type="HAMAP" id="MF_00235">
    <property type="entry name" value="Adenylate_kinase_Adk"/>
    <property type="match status" value="1"/>
</dbReference>
<dbReference type="HAMAP" id="MF_03172">
    <property type="entry name" value="Adenylate_kinase_UMP_CMP_kin"/>
    <property type="match status" value="1"/>
</dbReference>
<dbReference type="InterPro" id="IPR000850">
    <property type="entry name" value="Adenylat/UMP-CMP_kin"/>
</dbReference>
<dbReference type="InterPro" id="IPR033690">
    <property type="entry name" value="Adenylat_kinase_CS"/>
</dbReference>
<dbReference type="InterPro" id="IPR027417">
    <property type="entry name" value="P-loop_NTPase"/>
</dbReference>
<dbReference type="InterPro" id="IPR006266">
    <property type="entry name" value="UMP_CMP_kinase"/>
</dbReference>
<dbReference type="NCBIfam" id="TIGR01359">
    <property type="entry name" value="UMP_CMP_kin_fam"/>
    <property type="match status" value="1"/>
</dbReference>
<dbReference type="PANTHER" id="PTHR23359">
    <property type="entry name" value="NUCLEOTIDE KINASE"/>
    <property type="match status" value="1"/>
</dbReference>
<dbReference type="Pfam" id="PF00406">
    <property type="entry name" value="ADK"/>
    <property type="match status" value="1"/>
</dbReference>
<dbReference type="PRINTS" id="PR00094">
    <property type="entry name" value="ADENYLTKNASE"/>
</dbReference>
<dbReference type="SUPFAM" id="SSF52540">
    <property type="entry name" value="P-loop containing nucleoside triphosphate hydrolases"/>
    <property type="match status" value="1"/>
</dbReference>
<dbReference type="PROSITE" id="PS00113">
    <property type="entry name" value="ADENYLATE_KINASE"/>
    <property type="match status" value="1"/>
</dbReference>
<accession>Q7XMI0</accession>
<accession>Q0JFG3</accession>
<reference key="1">
    <citation type="journal article" date="2002" name="Nature">
        <title>Sequence and analysis of rice chromosome 4.</title>
        <authorList>
            <person name="Feng Q."/>
            <person name="Zhang Y."/>
            <person name="Hao P."/>
            <person name="Wang S."/>
            <person name="Fu G."/>
            <person name="Huang Y."/>
            <person name="Li Y."/>
            <person name="Zhu J."/>
            <person name="Liu Y."/>
            <person name="Hu X."/>
            <person name="Jia P."/>
            <person name="Zhang Y."/>
            <person name="Zhao Q."/>
            <person name="Ying K."/>
            <person name="Yu S."/>
            <person name="Tang Y."/>
            <person name="Weng Q."/>
            <person name="Zhang L."/>
            <person name="Lu Y."/>
            <person name="Mu J."/>
            <person name="Lu Y."/>
            <person name="Zhang L.S."/>
            <person name="Yu Z."/>
            <person name="Fan D."/>
            <person name="Liu X."/>
            <person name="Lu T."/>
            <person name="Li C."/>
            <person name="Wu Y."/>
            <person name="Sun T."/>
            <person name="Lei H."/>
            <person name="Li T."/>
            <person name="Hu H."/>
            <person name="Guan J."/>
            <person name="Wu M."/>
            <person name="Zhang R."/>
            <person name="Zhou B."/>
            <person name="Chen Z."/>
            <person name="Chen L."/>
            <person name="Jin Z."/>
            <person name="Wang R."/>
            <person name="Yin H."/>
            <person name="Cai Z."/>
            <person name="Ren S."/>
            <person name="Lv G."/>
            <person name="Gu W."/>
            <person name="Zhu G."/>
            <person name="Tu Y."/>
            <person name="Jia J."/>
            <person name="Zhang Y."/>
            <person name="Chen J."/>
            <person name="Kang H."/>
            <person name="Chen X."/>
            <person name="Shao C."/>
            <person name="Sun Y."/>
            <person name="Hu Q."/>
            <person name="Zhang X."/>
            <person name="Zhang W."/>
            <person name="Wang L."/>
            <person name="Ding C."/>
            <person name="Sheng H."/>
            <person name="Gu J."/>
            <person name="Chen S."/>
            <person name="Ni L."/>
            <person name="Zhu F."/>
            <person name="Chen W."/>
            <person name="Lan L."/>
            <person name="Lai Y."/>
            <person name="Cheng Z."/>
            <person name="Gu M."/>
            <person name="Jiang J."/>
            <person name="Li J."/>
            <person name="Hong G."/>
            <person name="Xue Y."/>
            <person name="Han B."/>
        </authorList>
    </citation>
    <scope>NUCLEOTIDE SEQUENCE [LARGE SCALE GENOMIC DNA]</scope>
    <source>
        <strain>cv. Nipponbare</strain>
    </source>
</reference>
<reference key="2">
    <citation type="journal article" date="2005" name="Nature">
        <title>The map-based sequence of the rice genome.</title>
        <authorList>
            <consortium name="International rice genome sequencing project (IRGSP)"/>
        </authorList>
    </citation>
    <scope>NUCLEOTIDE SEQUENCE [LARGE SCALE GENOMIC DNA]</scope>
    <source>
        <strain>cv. Nipponbare</strain>
    </source>
</reference>
<reference key="3">
    <citation type="journal article" date="2008" name="Nucleic Acids Res.">
        <title>The rice annotation project database (RAP-DB): 2008 update.</title>
        <authorList>
            <consortium name="The rice annotation project (RAP)"/>
        </authorList>
    </citation>
    <scope>GENOME REANNOTATION</scope>
    <source>
        <strain>cv. Nipponbare</strain>
    </source>
</reference>
<reference key="4">
    <citation type="journal article" date="2013" name="Rice">
        <title>Improvement of the Oryza sativa Nipponbare reference genome using next generation sequence and optical map data.</title>
        <authorList>
            <person name="Kawahara Y."/>
            <person name="de la Bastide M."/>
            <person name="Hamilton J.P."/>
            <person name="Kanamori H."/>
            <person name="McCombie W.R."/>
            <person name="Ouyang S."/>
            <person name="Schwartz D.C."/>
            <person name="Tanaka T."/>
            <person name="Wu J."/>
            <person name="Zhou S."/>
            <person name="Childs K.L."/>
            <person name="Davidson R.M."/>
            <person name="Lin H."/>
            <person name="Quesada-Ocampo L."/>
            <person name="Vaillancourt B."/>
            <person name="Sakai H."/>
            <person name="Lee S.S."/>
            <person name="Kim J."/>
            <person name="Numa H."/>
            <person name="Itoh T."/>
            <person name="Buell C.R."/>
            <person name="Matsumoto T."/>
        </authorList>
    </citation>
    <scope>GENOME REANNOTATION</scope>
    <source>
        <strain>cv. Nipponbare</strain>
    </source>
</reference>
<reference key="5">
    <citation type="journal article" date="2003" name="Science">
        <title>Collection, mapping, and annotation of over 28,000 cDNA clones from japonica rice.</title>
        <authorList>
            <consortium name="The rice full-length cDNA consortium"/>
        </authorList>
    </citation>
    <scope>NUCLEOTIDE SEQUENCE [LARGE SCALE MRNA]</scope>
    <source>
        <strain>cv. Nipponbare</strain>
    </source>
</reference>
<evidence type="ECO:0000255" key="1">
    <source>
        <dbReference type="HAMAP-Rule" id="MF_03172"/>
    </source>
</evidence>
<evidence type="ECO:0000305" key="2"/>
<protein>
    <recommendedName>
        <fullName evidence="1">UMP-CMP kinase 2</fullName>
        <ecNumber evidence="1">2.7.4.14</ecNumber>
    </recommendedName>
    <alternativeName>
        <fullName evidence="1">Deoxycytidylate kinase 2</fullName>
        <shortName evidence="1">CK 2</shortName>
        <shortName evidence="1">dCMP kinase 2</shortName>
    </alternativeName>
    <alternativeName>
        <fullName evidence="1">Uridine monophosphate/cytidine monophosphate kinase 2</fullName>
        <shortName evidence="1">UMP/CMP kinase 2</shortName>
        <shortName evidence="1">UMP/CMPK 2</shortName>
    </alternativeName>
</protein>
<gene>
    <name type="ordered locus">Os04g0105500</name>
    <name type="ordered locus">LOC_Os04g01530</name>
    <name type="ORF">OSJNBb0004G23.5</name>
</gene>
<keyword id="KW-0067">ATP-binding</keyword>
<keyword id="KW-0963">Cytoplasm</keyword>
<keyword id="KW-0418">Kinase</keyword>
<keyword id="KW-0547">Nucleotide-binding</keyword>
<keyword id="KW-0539">Nucleus</keyword>
<keyword id="KW-0665">Pyrimidine biosynthesis</keyword>
<keyword id="KW-1185">Reference proteome</keyword>
<keyword id="KW-0808">Transferase</keyword>
<sequence length="243" mass="26967">MWRRQVGALLLRHRSTPSSTLRHHLPLPVPDQSPPLASNLLLRLFTSQSGEGGDGATKPFIAFVLGGPGSGKGTQCVRIASDFGFAHLSAGDLLRSEISTGREKGELILNIIKEGKIVPSEITVELIRKAMESSDAKRVLIDGFPRCEENRIAFERITGTEPDLVIFFDCPEDEMVKRLLGRNQGRVDDNIETIKKRLKVFESLNIPVVDYYTSRGKVHKINATGTEEEIFGAVHKLFSSLRF</sequence>
<name>KCY2_ORYSJ</name>
<comment type="function">
    <text evidence="1">Catalyzes the phosphorylation of pyrimidine nucleoside monophosphates at the expense of ATP. Plays an important role in de novo pyrimidine nucleotide biosynthesis. Has preference for UMP and CMP as phosphate acceptors.</text>
</comment>
<comment type="catalytic activity">
    <reaction evidence="1">
        <text>UMP + ATP = UDP + ADP</text>
        <dbReference type="Rhea" id="RHEA:24400"/>
        <dbReference type="ChEBI" id="CHEBI:30616"/>
        <dbReference type="ChEBI" id="CHEBI:57865"/>
        <dbReference type="ChEBI" id="CHEBI:58223"/>
        <dbReference type="ChEBI" id="CHEBI:456216"/>
        <dbReference type="EC" id="2.7.4.14"/>
    </reaction>
</comment>
<comment type="catalytic activity">
    <reaction evidence="1">
        <text>CMP + ATP = CDP + ADP</text>
        <dbReference type="Rhea" id="RHEA:11600"/>
        <dbReference type="ChEBI" id="CHEBI:30616"/>
        <dbReference type="ChEBI" id="CHEBI:58069"/>
        <dbReference type="ChEBI" id="CHEBI:60377"/>
        <dbReference type="ChEBI" id="CHEBI:456216"/>
        <dbReference type="EC" id="2.7.4.14"/>
    </reaction>
</comment>
<comment type="catalytic activity">
    <reaction evidence="1">
        <text>dCMP + ATP = dCDP + ADP</text>
        <dbReference type="Rhea" id="RHEA:25094"/>
        <dbReference type="ChEBI" id="CHEBI:30616"/>
        <dbReference type="ChEBI" id="CHEBI:57566"/>
        <dbReference type="ChEBI" id="CHEBI:58593"/>
        <dbReference type="ChEBI" id="CHEBI:456216"/>
        <dbReference type="EC" id="2.7.4.14"/>
    </reaction>
</comment>
<comment type="cofactor">
    <cofactor evidence="1">
        <name>Mg(2+)</name>
        <dbReference type="ChEBI" id="CHEBI:18420"/>
    </cofactor>
    <text evidence="1">Binds 1 Mg(2+) ion per monomer.</text>
</comment>
<comment type="subunit">
    <text evidence="1">Monomer.</text>
</comment>
<comment type="subcellular location">
    <subcellularLocation>
        <location evidence="1">Cytoplasm</location>
    </subcellularLocation>
    <subcellularLocation>
        <location evidence="1">Nucleus</location>
    </subcellularLocation>
</comment>
<comment type="domain">
    <text evidence="1">Consists of three domains, a large central CORE domain and two small peripheral domains, NMPbind and LID, which undergo movements during catalysis. The LID domain closes over the site of phosphoryl transfer upon ATP binding. Assembling and dissambling the active center during each catalytic cycle provides an effective means to prevent ATP hydrolysis.</text>
</comment>
<comment type="similarity">
    <text evidence="1">Belongs to the adenylate kinase family. UMP-CMP kinase subfamily.</text>
</comment>
<comment type="sequence caution" evidence="2">
    <conflict type="erroneous gene model prediction">
        <sequence resource="EMBL-CDS" id="BAF13924"/>
    </conflict>
</comment>
<comment type="sequence caution" evidence="2">
    <conflict type="erroneous gene model prediction">
        <sequence resource="EMBL-CDS" id="CAE04607"/>
    </conflict>
</comment>